<gene>
    <name evidence="1" type="primary">nhaA</name>
    <name type="ordered locus">Shewmr4_2860</name>
</gene>
<reference key="1">
    <citation type="submission" date="2006-08" db="EMBL/GenBank/DDBJ databases">
        <title>Complete sequence of Shewanella sp. MR-4.</title>
        <authorList>
            <consortium name="US DOE Joint Genome Institute"/>
            <person name="Copeland A."/>
            <person name="Lucas S."/>
            <person name="Lapidus A."/>
            <person name="Barry K."/>
            <person name="Detter J.C."/>
            <person name="Glavina del Rio T."/>
            <person name="Hammon N."/>
            <person name="Israni S."/>
            <person name="Dalin E."/>
            <person name="Tice H."/>
            <person name="Pitluck S."/>
            <person name="Kiss H."/>
            <person name="Brettin T."/>
            <person name="Bruce D."/>
            <person name="Han C."/>
            <person name="Tapia R."/>
            <person name="Gilna P."/>
            <person name="Schmutz J."/>
            <person name="Larimer F."/>
            <person name="Land M."/>
            <person name="Hauser L."/>
            <person name="Kyrpides N."/>
            <person name="Mikhailova N."/>
            <person name="Nealson K."/>
            <person name="Konstantinidis K."/>
            <person name="Klappenbach J."/>
            <person name="Tiedje J."/>
            <person name="Richardson P."/>
        </authorList>
    </citation>
    <scope>NUCLEOTIDE SEQUENCE [LARGE SCALE GENOMIC DNA]</scope>
    <source>
        <strain>MR-4</strain>
    </source>
</reference>
<proteinExistence type="inferred from homology"/>
<protein>
    <recommendedName>
        <fullName evidence="1">Na(+)/H(+) antiporter NhaA</fullName>
    </recommendedName>
    <alternativeName>
        <fullName evidence="1">Sodium/proton antiporter NhaA</fullName>
    </alternativeName>
</protein>
<sequence>MEKAIRNFLSQESAGGILLLVAVALAMLMANSPLAGLYQGFLGTEVQVRVGALDLHKPLLLWINDGLMALFFLLIGLEVKRELLEGALSSVAQASLPTFAAIGGMLVPAGIYLLFNYGDPVTQAGWAIPAATDIAFALGIMALLGSRVPVALKVFLLALAIIDDLGVIVIIALFYSTDLSTISLIIASIAIVGLVALNRKGVTALAPYGVLGLVLWVAVLKSGVHATLAGVIIAFCIPLRAKDGSSPSEHLEHSLHPWSTFLILPVFAFANAGVALGNMSLNTLISPVPVGIALGLMLGKPIGVMLFSYAAVKLRLAQLPNGIGWKQIAPVAAMCGIGFTMSMFIASLAFEQADPMYGDLARLGTLIGSILAALIGYFWLSKVLPKQGV</sequence>
<dbReference type="EMBL" id="CP000446">
    <property type="protein sequence ID" value="ABI39931.1"/>
    <property type="molecule type" value="Genomic_DNA"/>
</dbReference>
<dbReference type="RefSeq" id="WP_011623610.1">
    <property type="nucleotide sequence ID" value="NC_008321.1"/>
</dbReference>
<dbReference type="SMR" id="Q0HG86"/>
<dbReference type="KEGG" id="she:Shewmr4_2860"/>
<dbReference type="HOGENOM" id="CLU_015803_1_0_6"/>
<dbReference type="GO" id="GO:0005886">
    <property type="term" value="C:plasma membrane"/>
    <property type="evidence" value="ECO:0007669"/>
    <property type="project" value="UniProtKB-SubCell"/>
</dbReference>
<dbReference type="GO" id="GO:0015385">
    <property type="term" value="F:sodium:proton antiporter activity"/>
    <property type="evidence" value="ECO:0007669"/>
    <property type="project" value="TreeGrafter"/>
</dbReference>
<dbReference type="GO" id="GO:0006885">
    <property type="term" value="P:regulation of pH"/>
    <property type="evidence" value="ECO:0007669"/>
    <property type="project" value="InterPro"/>
</dbReference>
<dbReference type="Gene3D" id="1.20.1530.10">
    <property type="entry name" value="Na+/H+ antiporter like domain"/>
    <property type="match status" value="1"/>
</dbReference>
<dbReference type="HAMAP" id="MF_01844">
    <property type="entry name" value="NhaA"/>
    <property type="match status" value="1"/>
</dbReference>
<dbReference type="InterPro" id="IPR023171">
    <property type="entry name" value="Na/H_antiporter_dom_sf"/>
</dbReference>
<dbReference type="InterPro" id="IPR004670">
    <property type="entry name" value="NhaA"/>
</dbReference>
<dbReference type="NCBIfam" id="TIGR00773">
    <property type="entry name" value="NhaA"/>
    <property type="match status" value="1"/>
</dbReference>
<dbReference type="NCBIfam" id="NF007111">
    <property type="entry name" value="PRK09560.1"/>
    <property type="match status" value="1"/>
</dbReference>
<dbReference type="NCBIfam" id="NF007112">
    <property type="entry name" value="PRK09561.1"/>
    <property type="match status" value="1"/>
</dbReference>
<dbReference type="PANTHER" id="PTHR30341:SF0">
    <property type="entry name" value="NA(+)_H(+) ANTIPORTER NHAA"/>
    <property type="match status" value="1"/>
</dbReference>
<dbReference type="PANTHER" id="PTHR30341">
    <property type="entry name" value="SODIUM ION/PROTON ANTIPORTER NHAA-RELATED"/>
    <property type="match status" value="1"/>
</dbReference>
<dbReference type="Pfam" id="PF06965">
    <property type="entry name" value="Na_H_antiport_1"/>
    <property type="match status" value="1"/>
</dbReference>
<accession>Q0HG86</accession>
<name>NHAA_SHESM</name>
<comment type="function">
    <text evidence="1">Na(+)/H(+) antiporter that extrudes sodium in exchange for external protons.</text>
</comment>
<comment type="catalytic activity">
    <reaction evidence="1">
        <text>Na(+)(in) + 2 H(+)(out) = Na(+)(out) + 2 H(+)(in)</text>
        <dbReference type="Rhea" id="RHEA:29251"/>
        <dbReference type="ChEBI" id="CHEBI:15378"/>
        <dbReference type="ChEBI" id="CHEBI:29101"/>
    </reaction>
    <physiologicalReaction direction="left-to-right" evidence="1">
        <dbReference type="Rhea" id="RHEA:29252"/>
    </physiologicalReaction>
</comment>
<comment type="subcellular location">
    <subcellularLocation>
        <location evidence="1">Cell inner membrane</location>
        <topology evidence="1">Multi-pass membrane protein</topology>
    </subcellularLocation>
</comment>
<comment type="similarity">
    <text evidence="1">Belongs to the NhaA Na(+)/H(+) (TC 2.A.33) antiporter family.</text>
</comment>
<evidence type="ECO:0000255" key="1">
    <source>
        <dbReference type="HAMAP-Rule" id="MF_01844"/>
    </source>
</evidence>
<organism>
    <name type="scientific">Shewanella sp. (strain MR-4)</name>
    <dbReference type="NCBI Taxonomy" id="60480"/>
    <lineage>
        <taxon>Bacteria</taxon>
        <taxon>Pseudomonadati</taxon>
        <taxon>Pseudomonadota</taxon>
        <taxon>Gammaproteobacteria</taxon>
        <taxon>Alteromonadales</taxon>
        <taxon>Shewanellaceae</taxon>
        <taxon>Shewanella</taxon>
    </lineage>
</organism>
<feature type="chain" id="PRO_0000334432" description="Na(+)/H(+) antiporter NhaA">
    <location>
        <begin position="1"/>
        <end position="389"/>
    </location>
</feature>
<feature type="transmembrane region" description="Helical" evidence="1">
    <location>
        <begin position="17"/>
        <end position="37"/>
    </location>
</feature>
<feature type="transmembrane region" description="Helical" evidence="1">
    <location>
        <begin position="59"/>
        <end position="79"/>
    </location>
</feature>
<feature type="transmembrane region" description="Helical" evidence="1">
    <location>
        <begin position="95"/>
        <end position="115"/>
    </location>
</feature>
<feature type="transmembrane region" description="Helical" evidence="1">
    <location>
        <begin position="124"/>
        <end position="144"/>
    </location>
</feature>
<feature type="transmembrane region" description="Helical" evidence="1">
    <location>
        <begin position="154"/>
        <end position="174"/>
    </location>
</feature>
<feature type="transmembrane region" description="Helical" evidence="1">
    <location>
        <begin position="177"/>
        <end position="197"/>
    </location>
</feature>
<feature type="transmembrane region" description="Helical" evidence="1">
    <location>
        <begin position="213"/>
        <end position="233"/>
    </location>
</feature>
<feature type="transmembrane region" description="Helical" evidence="1">
    <location>
        <begin position="261"/>
        <end position="281"/>
    </location>
</feature>
<feature type="transmembrane region" description="Helical" evidence="1">
    <location>
        <begin position="287"/>
        <end position="307"/>
    </location>
</feature>
<feature type="transmembrane region" description="Helical" evidence="1">
    <location>
        <begin position="328"/>
        <end position="348"/>
    </location>
</feature>
<feature type="transmembrane region" description="Helical" evidence="1">
    <location>
        <begin position="363"/>
        <end position="383"/>
    </location>
</feature>
<keyword id="KW-0050">Antiport</keyword>
<keyword id="KW-0997">Cell inner membrane</keyword>
<keyword id="KW-1003">Cell membrane</keyword>
<keyword id="KW-0406">Ion transport</keyword>
<keyword id="KW-0472">Membrane</keyword>
<keyword id="KW-0915">Sodium</keyword>
<keyword id="KW-0739">Sodium transport</keyword>
<keyword id="KW-0812">Transmembrane</keyword>
<keyword id="KW-1133">Transmembrane helix</keyword>
<keyword id="KW-0813">Transport</keyword>